<evidence type="ECO:0000250" key="1"/>
<evidence type="ECO:0000255" key="2">
    <source>
        <dbReference type="HAMAP-Rule" id="MF_00054"/>
    </source>
</evidence>
<feature type="chain" id="PRO_1000201461" description="Elongation factor G">
    <location>
        <begin position="1"/>
        <end position="704"/>
    </location>
</feature>
<feature type="domain" description="tr-type G">
    <location>
        <begin position="8"/>
        <end position="290"/>
    </location>
</feature>
<feature type="binding site" evidence="2">
    <location>
        <begin position="17"/>
        <end position="24"/>
    </location>
    <ligand>
        <name>GTP</name>
        <dbReference type="ChEBI" id="CHEBI:37565"/>
    </ligand>
</feature>
<feature type="binding site" evidence="2">
    <location>
        <begin position="88"/>
        <end position="92"/>
    </location>
    <ligand>
        <name>GTP</name>
        <dbReference type="ChEBI" id="CHEBI:37565"/>
    </ligand>
</feature>
<feature type="binding site" evidence="2">
    <location>
        <begin position="142"/>
        <end position="145"/>
    </location>
    <ligand>
        <name>GTP</name>
        <dbReference type="ChEBI" id="CHEBI:37565"/>
    </ligand>
</feature>
<feature type="modified residue" description="N6-acetyllysine" evidence="1">
    <location>
        <position position="504"/>
    </location>
</feature>
<feature type="modified residue" description="N6-acetyllysine" evidence="1">
    <location>
        <position position="643"/>
    </location>
</feature>
<proteinExistence type="inferred from homology"/>
<reference key="1">
    <citation type="journal article" date="2009" name="PLoS Genet.">
        <title>Organised genome dynamics in the Escherichia coli species results in highly diverse adaptive paths.</title>
        <authorList>
            <person name="Touchon M."/>
            <person name="Hoede C."/>
            <person name="Tenaillon O."/>
            <person name="Barbe V."/>
            <person name="Baeriswyl S."/>
            <person name="Bidet P."/>
            <person name="Bingen E."/>
            <person name="Bonacorsi S."/>
            <person name="Bouchier C."/>
            <person name="Bouvet O."/>
            <person name="Calteau A."/>
            <person name="Chiapello H."/>
            <person name="Clermont O."/>
            <person name="Cruveiller S."/>
            <person name="Danchin A."/>
            <person name="Diard M."/>
            <person name="Dossat C."/>
            <person name="Karoui M.E."/>
            <person name="Frapy E."/>
            <person name="Garry L."/>
            <person name="Ghigo J.M."/>
            <person name="Gilles A.M."/>
            <person name="Johnson J."/>
            <person name="Le Bouguenec C."/>
            <person name="Lescat M."/>
            <person name="Mangenot S."/>
            <person name="Martinez-Jehanne V."/>
            <person name="Matic I."/>
            <person name="Nassif X."/>
            <person name="Oztas S."/>
            <person name="Petit M.A."/>
            <person name="Pichon C."/>
            <person name="Rouy Z."/>
            <person name="Ruf C.S."/>
            <person name="Schneider D."/>
            <person name="Tourret J."/>
            <person name="Vacherie B."/>
            <person name="Vallenet D."/>
            <person name="Medigue C."/>
            <person name="Rocha E.P.C."/>
            <person name="Denamur E."/>
        </authorList>
    </citation>
    <scope>NUCLEOTIDE SEQUENCE [LARGE SCALE GENOMIC DNA]</scope>
    <source>
        <strain>S88 / ExPEC</strain>
    </source>
</reference>
<dbReference type="EMBL" id="CU928161">
    <property type="protein sequence ID" value="CAR04944.1"/>
    <property type="molecule type" value="Genomic_DNA"/>
</dbReference>
<dbReference type="RefSeq" id="WP_000124700.1">
    <property type="nucleotide sequence ID" value="NC_011742.1"/>
</dbReference>
<dbReference type="SMR" id="B7MCV5"/>
<dbReference type="GeneID" id="93778658"/>
<dbReference type="KEGG" id="ecz:ECS88_3728"/>
<dbReference type="HOGENOM" id="CLU_002794_4_1_6"/>
<dbReference type="Proteomes" id="UP000000747">
    <property type="component" value="Chromosome"/>
</dbReference>
<dbReference type="GO" id="GO:0005737">
    <property type="term" value="C:cytoplasm"/>
    <property type="evidence" value="ECO:0007669"/>
    <property type="project" value="UniProtKB-SubCell"/>
</dbReference>
<dbReference type="GO" id="GO:0005525">
    <property type="term" value="F:GTP binding"/>
    <property type="evidence" value="ECO:0007669"/>
    <property type="project" value="UniProtKB-UniRule"/>
</dbReference>
<dbReference type="GO" id="GO:0003924">
    <property type="term" value="F:GTPase activity"/>
    <property type="evidence" value="ECO:0007669"/>
    <property type="project" value="InterPro"/>
</dbReference>
<dbReference type="GO" id="GO:0097216">
    <property type="term" value="F:guanosine tetraphosphate binding"/>
    <property type="evidence" value="ECO:0007669"/>
    <property type="project" value="UniProtKB-ARBA"/>
</dbReference>
<dbReference type="GO" id="GO:0003746">
    <property type="term" value="F:translation elongation factor activity"/>
    <property type="evidence" value="ECO:0007669"/>
    <property type="project" value="UniProtKB-UniRule"/>
</dbReference>
<dbReference type="GO" id="GO:0032790">
    <property type="term" value="P:ribosome disassembly"/>
    <property type="evidence" value="ECO:0007669"/>
    <property type="project" value="TreeGrafter"/>
</dbReference>
<dbReference type="CDD" id="cd01886">
    <property type="entry name" value="EF-G"/>
    <property type="match status" value="1"/>
</dbReference>
<dbReference type="CDD" id="cd16262">
    <property type="entry name" value="EFG_III"/>
    <property type="match status" value="1"/>
</dbReference>
<dbReference type="CDD" id="cd01434">
    <property type="entry name" value="EFG_mtEFG1_IV"/>
    <property type="match status" value="1"/>
</dbReference>
<dbReference type="CDD" id="cd03713">
    <property type="entry name" value="EFG_mtEFG_C"/>
    <property type="match status" value="1"/>
</dbReference>
<dbReference type="CDD" id="cd04088">
    <property type="entry name" value="EFG_mtEFG_II"/>
    <property type="match status" value="1"/>
</dbReference>
<dbReference type="FunFam" id="2.40.30.10:FF:000006">
    <property type="entry name" value="Elongation factor G"/>
    <property type="match status" value="1"/>
</dbReference>
<dbReference type="FunFam" id="3.30.230.10:FF:000003">
    <property type="entry name" value="Elongation factor G"/>
    <property type="match status" value="1"/>
</dbReference>
<dbReference type="FunFam" id="3.30.70.240:FF:000001">
    <property type="entry name" value="Elongation factor G"/>
    <property type="match status" value="1"/>
</dbReference>
<dbReference type="FunFam" id="3.30.70.870:FF:000001">
    <property type="entry name" value="Elongation factor G"/>
    <property type="match status" value="1"/>
</dbReference>
<dbReference type="FunFam" id="3.40.50.300:FF:000029">
    <property type="entry name" value="Elongation factor G"/>
    <property type="match status" value="1"/>
</dbReference>
<dbReference type="Gene3D" id="3.30.230.10">
    <property type="match status" value="1"/>
</dbReference>
<dbReference type="Gene3D" id="3.30.70.240">
    <property type="match status" value="1"/>
</dbReference>
<dbReference type="Gene3D" id="3.30.70.870">
    <property type="entry name" value="Elongation Factor G (Translational Gtpase), domain 3"/>
    <property type="match status" value="1"/>
</dbReference>
<dbReference type="Gene3D" id="3.40.50.300">
    <property type="entry name" value="P-loop containing nucleotide triphosphate hydrolases"/>
    <property type="match status" value="1"/>
</dbReference>
<dbReference type="Gene3D" id="2.40.30.10">
    <property type="entry name" value="Translation factors"/>
    <property type="match status" value="1"/>
</dbReference>
<dbReference type="HAMAP" id="MF_00054_B">
    <property type="entry name" value="EF_G_EF_2_B"/>
    <property type="match status" value="1"/>
</dbReference>
<dbReference type="InterPro" id="IPR041095">
    <property type="entry name" value="EFG_II"/>
</dbReference>
<dbReference type="InterPro" id="IPR009022">
    <property type="entry name" value="EFG_III"/>
</dbReference>
<dbReference type="InterPro" id="IPR035647">
    <property type="entry name" value="EFG_III/V"/>
</dbReference>
<dbReference type="InterPro" id="IPR047872">
    <property type="entry name" value="EFG_IV"/>
</dbReference>
<dbReference type="InterPro" id="IPR035649">
    <property type="entry name" value="EFG_V"/>
</dbReference>
<dbReference type="InterPro" id="IPR000640">
    <property type="entry name" value="EFG_V-like"/>
</dbReference>
<dbReference type="InterPro" id="IPR004161">
    <property type="entry name" value="EFTu-like_2"/>
</dbReference>
<dbReference type="InterPro" id="IPR031157">
    <property type="entry name" value="G_TR_CS"/>
</dbReference>
<dbReference type="InterPro" id="IPR027417">
    <property type="entry name" value="P-loop_NTPase"/>
</dbReference>
<dbReference type="InterPro" id="IPR020568">
    <property type="entry name" value="Ribosomal_Su5_D2-typ_SF"/>
</dbReference>
<dbReference type="InterPro" id="IPR014721">
    <property type="entry name" value="Ribsml_uS5_D2-typ_fold_subgr"/>
</dbReference>
<dbReference type="InterPro" id="IPR005225">
    <property type="entry name" value="Small_GTP-bd"/>
</dbReference>
<dbReference type="InterPro" id="IPR000795">
    <property type="entry name" value="T_Tr_GTP-bd_dom"/>
</dbReference>
<dbReference type="InterPro" id="IPR009000">
    <property type="entry name" value="Transl_B-barrel_sf"/>
</dbReference>
<dbReference type="InterPro" id="IPR004540">
    <property type="entry name" value="Transl_elong_EFG/EF2"/>
</dbReference>
<dbReference type="InterPro" id="IPR005517">
    <property type="entry name" value="Transl_elong_EFG/EF2_IV"/>
</dbReference>
<dbReference type="NCBIfam" id="TIGR00484">
    <property type="entry name" value="EF-G"/>
    <property type="match status" value="1"/>
</dbReference>
<dbReference type="NCBIfam" id="NF009381">
    <property type="entry name" value="PRK12740.1-5"/>
    <property type="match status" value="1"/>
</dbReference>
<dbReference type="NCBIfam" id="TIGR00231">
    <property type="entry name" value="small_GTP"/>
    <property type="match status" value="1"/>
</dbReference>
<dbReference type="PANTHER" id="PTHR43261:SF1">
    <property type="entry name" value="RIBOSOME-RELEASING FACTOR 2, MITOCHONDRIAL"/>
    <property type="match status" value="1"/>
</dbReference>
<dbReference type="PANTHER" id="PTHR43261">
    <property type="entry name" value="TRANSLATION ELONGATION FACTOR G-RELATED"/>
    <property type="match status" value="1"/>
</dbReference>
<dbReference type="Pfam" id="PF00679">
    <property type="entry name" value="EFG_C"/>
    <property type="match status" value="1"/>
</dbReference>
<dbReference type="Pfam" id="PF14492">
    <property type="entry name" value="EFG_III"/>
    <property type="match status" value="1"/>
</dbReference>
<dbReference type="Pfam" id="PF03764">
    <property type="entry name" value="EFG_IV"/>
    <property type="match status" value="1"/>
</dbReference>
<dbReference type="Pfam" id="PF00009">
    <property type="entry name" value="GTP_EFTU"/>
    <property type="match status" value="1"/>
</dbReference>
<dbReference type="Pfam" id="PF03144">
    <property type="entry name" value="GTP_EFTU_D2"/>
    <property type="match status" value="1"/>
</dbReference>
<dbReference type="PRINTS" id="PR00315">
    <property type="entry name" value="ELONGATNFCT"/>
</dbReference>
<dbReference type="SMART" id="SM00838">
    <property type="entry name" value="EFG_C"/>
    <property type="match status" value="1"/>
</dbReference>
<dbReference type="SMART" id="SM00889">
    <property type="entry name" value="EFG_IV"/>
    <property type="match status" value="1"/>
</dbReference>
<dbReference type="SUPFAM" id="SSF54980">
    <property type="entry name" value="EF-G C-terminal domain-like"/>
    <property type="match status" value="2"/>
</dbReference>
<dbReference type="SUPFAM" id="SSF52540">
    <property type="entry name" value="P-loop containing nucleoside triphosphate hydrolases"/>
    <property type="match status" value="1"/>
</dbReference>
<dbReference type="SUPFAM" id="SSF54211">
    <property type="entry name" value="Ribosomal protein S5 domain 2-like"/>
    <property type="match status" value="1"/>
</dbReference>
<dbReference type="SUPFAM" id="SSF50447">
    <property type="entry name" value="Translation proteins"/>
    <property type="match status" value="1"/>
</dbReference>
<dbReference type="PROSITE" id="PS00301">
    <property type="entry name" value="G_TR_1"/>
    <property type="match status" value="1"/>
</dbReference>
<dbReference type="PROSITE" id="PS51722">
    <property type="entry name" value="G_TR_2"/>
    <property type="match status" value="1"/>
</dbReference>
<protein>
    <recommendedName>
        <fullName evidence="2">Elongation factor G</fullName>
        <shortName evidence="2">EF-G</shortName>
    </recommendedName>
</protein>
<gene>
    <name evidence="2" type="primary">fusA</name>
    <name type="ordered locus">ECS88_3728</name>
</gene>
<accession>B7MCV5</accession>
<comment type="function">
    <text evidence="2">Catalyzes the GTP-dependent ribosomal translocation step during translation elongation. During this step, the ribosome changes from the pre-translocational (PRE) to the post-translocational (POST) state as the newly formed A-site-bound peptidyl-tRNA and P-site-bound deacylated tRNA move to the P and E sites, respectively. Catalyzes the coordinated movement of the two tRNA molecules, the mRNA and conformational changes in the ribosome.</text>
</comment>
<comment type="subcellular location">
    <subcellularLocation>
        <location evidence="2">Cytoplasm</location>
    </subcellularLocation>
</comment>
<comment type="similarity">
    <text evidence="2">Belongs to the TRAFAC class translation factor GTPase superfamily. Classic translation factor GTPase family. EF-G/EF-2 subfamily.</text>
</comment>
<name>EFG_ECO45</name>
<organism>
    <name type="scientific">Escherichia coli O45:K1 (strain S88 / ExPEC)</name>
    <dbReference type="NCBI Taxonomy" id="585035"/>
    <lineage>
        <taxon>Bacteria</taxon>
        <taxon>Pseudomonadati</taxon>
        <taxon>Pseudomonadota</taxon>
        <taxon>Gammaproteobacteria</taxon>
        <taxon>Enterobacterales</taxon>
        <taxon>Enterobacteriaceae</taxon>
        <taxon>Escherichia</taxon>
    </lineage>
</organism>
<sequence length="704" mass="77581">MARTTPIARYRNIGISAHIDAGKTTTTERILFYTGVNHKIGEVHDGAATMDWMEQEQERGITITSAATTAFWSGMAKQYEPHRINIIDTPGHVDFTIEVERSMRVLDGAVMVYCAVGGVQPQSETVWRQANKYKVPRIAFVNKMDRMGANFLKVVNQIKTRLGANPVPLQLAIGAEEHFTGVVDLVKMKAINWNDADQGVTFEYEDIPADMVELANEWHQNLIESAAEASEELMEKYLGGEELTEAEIKGALRQRVLNNEIILVTCGSAFKNKGVQAMLDAVIDYLPSPVDVPAINGILDDGKDTPAERHASDDEPFSALAFKIATDPFVGNLTFFRVYSGVVNSGDTVLNSVKAARERFGRIVQMHANKREEIKEVRAGDIAAAIGLKDVTTGDTLCDPDAPIILERMEFPEPVISIAVEPKTKADQEKMGLALGRLAKEDPSFRVWTDEESNQTIIAGMGELHLDIIVDRMKREFNVEANVGKPQVAYRETIRQKVTDVEGKHAKQSGGRGQYGHVVIDMYPLEPGSNPKGYEFINDIKGGVIPGEYIPAVDKGIQEQLKAGPLAGYPVVDMGIRLHFGSYHDVDSSELAFKLAASIAFKEGFKKAKPVLLEPIMKVEVETPEENTGDVIGDLSRRRGMLKGQESEVTGVKIHAEVPLSEMFGYATQLRSLTKGRASYTMEFLKYDEAPSNVAQAVIEARGK</sequence>
<keyword id="KW-0007">Acetylation</keyword>
<keyword id="KW-0963">Cytoplasm</keyword>
<keyword id="KW-0251">Elongation factor</keyword>
<keyword id="KW-0342">GTP-binding</keyword>
<keyword id="KW-0547">Nucleotide-binding</keyword>
<keyword id="KW-0648">Protein biosynthesis</keyword>
<keyword id="KW-1185">Reference proteome</keyword>